<sequence>MKLIPFLSEEEIQKLQEAEANSSKEQKKTAEQIEAIYTSGQNILVSASAGSGKTFVMAERILNQLARGVEISQLFISTFTVKAATELKERLEKKISKKIQETDDVDLKQHLGRQLADLPNAAIGTMDSFTQKFLGKHGYLLDIAPNFRILQNQSEQLLLENEVFHEVFEAHYQGKQKETFSHLLKNFAGRGKDERGLRQQVYKIYDFLQSTSNPQKWLSESFLKGFEKADFTSEKEKLTEQIKQALWDLESFFRYHLDNDAKEFAKAAYLENVQLILDEIGSLNQESDSQAYQAVLARVVAISKEKNGRALTNASRKADLKPLADAYNEERKTQFAKLGQLSDQITILDYQERYHQDTWELAKTFQTFMSHFVEAYRQRKRQENAFEFADISHYTIEILENFPQVRESYQERFHEVMVDEYQDTNHIQERMLELLSNGHNRFMVGDIKQSIYRFRQADPQIFNEKFQRYAQNPQEGKLILLKANFRSSSEVLSATNDVFERLMDQEVGEINYDNKHQLVFANTKLTPNPDNKAEFLLYDKDDTGEEEESQTETKLTGEMRLVIKEILKLHQEKGVAFKEIALLTSSRSRNDQILLALSEYGIPVKTDGEQNNYLQSLEVQVMLDTLRVIHNPLQDYALVALMKSPMFGFDEDELARLSLQKAEDKVHENLYEKLVNAQKMASSQKGLIHTALAEKLKQFMDILASWRLYAKTHSLYDLIWKIYNDRFYYDYVGALPNGPARQANLYALALRADQFEKSNFKGLSRFIRMIDQVLEAQHDLASVAVAPPKDAVELMTIHKSKGLEFPYVFILNMDQDFNKQDSMSEVILSRQNGLGVKYIAKMETGAVEDHYPKTIKLSIPSLTYRQNEEELQLASYSEQMRLLYVAMTRAEKKLYLVGKGSREKLEVKQYPAAKNGKLNSNTRLQARNFQDWLWAISKVFTKDKLNFSYRFIGEDQLTREAIGELETKSPLQDSSQADNRQSDTIKEALEMLKEVEVYNTLHRAAIELPSVQTPSQIKKFYEPVMDMEGVEIAGQGQSVGKKISFDLPDFSTKEKVTGAEIGSATHELMQRIDLSQQLTLASLTETLKQVQTSQAVRDKINLDKILAFFDTVLGQEILANTDHLYREQPFSMLKRDQKSQEDFVVRGILDGYLLYENKIVLFDYKTDRYDEPSQLVDRYRGQLALYEEALSRAYSIENIEKYLILLGKDEVQVVKV</sequence>
<organism>
    <name type="scientific">Streptococcus pneumoniae (strain ATCC 700669 / Spain 23F-1)</name>
    <dbReference type="NCBI Taxonomy" id="561276"/>
    <lineage>
        <taxon>Bacteria</taxon>
        <taxon>Bacillati</taxon>
        <taxon>Bacillota</taxon>
        <taxon>Bacilli</taxon>
        <taxon>Lactobacillales</taxon>
        <taxon>Streptococcaceae</taxon>
        <taxon>Streptococcus</taxon>
    </lineage>
</organism>
<keyword id="KW-0067">ATP-binding</keyword>
<keyword id="KW-0227">DNA damage</keyword>
<keyword id="KW-0234">DNA repair</keyword>
<keyword id="KW-0238">DNA-binding</keyword>
<keyword id="KW-0269">Exonuclease</keyword>
<keyword id="KW-0347">Helicase</keyword>
<keyword id="KW-0378">Hydrolase</keyword>
<keyword id="KW-0413">Isomerase</keyword>
<keyword id="KW-0540">Nuclease</keyword>
<keyword id="KW-0547">Nucleotide-binding</keyword>
<accession>B8ZQ32</accession>
<protein>
    <recommendedName>
        <fullName evidence="1">ATP-dependent helicase/nuclease subunit A</fullName>
        <ecNumber evidence="1">3.1.-.-</ecNumber>
        <ecNumber evidence="1">5.6.2.4</ecNumber>
    </recommendedName>
    <alternativeName>
        <fullName evidence="1">ATP-dependent helicase/nuclease AddA</fullName>
    </alternativeName>
    <alternativeName>
        <fullName evidence="1">DNA 3'-5' helicase AddA</fullName>
    </alternativeName>
</protein>
<reference key="1">
    <citation type="journal article" date="2009" name="J. Bacteriol.">
        <title>Role of conjugative elements in the evolution of the multidrug-resistant pandemic clone Streptococcus pneumoniae Spain23F ST81.</title>
        <authorList>
            <person name="Croucher N.J."/>
            <person name="Walker D."/>
            <person name="Romero P."/>
            <person name="Lennard N."/>
            <person name="Paterson G.K."/>
            <person name="Bason N.C."/>
            <person name="Mitchell A.M."/>
            <person name="Quail M.A."/>
            <person name="Andrew P.W."/>
            <person name="Parkhill J."/>
            <person name="Bentley S.D."/>
            <person name="Mitchell T.J."/>
        </authorList>
    </citation>
    <scope>NUCLEOTIDE SEQUENCE [LARGE SCALE GENOMIC DNA]</scope>
    <source>
        <strain>ATCC 700669 / Spain 23F-1</strain>
    </source>
</reference>
<dbReference type="EC" id="3.1.-.-" evidence="1"/>
<dbReference type="EC" id="5.6.2.4" evidence="1"/>
<dbReference type="EMBL" id="FM211187">
    <property type="protein sequence ID" value="CAR68871.1"/>
    <property type="molecule type" value="Genomic_DNA"/>
</dbReference>
<dbReference type="RefSeq" id="WP_000767248.1">
    <property type="nucleotide sequence ID" value="NC_011900.1"/>
</dbReference>
<dbReference type="SMR" id="B8ZQ32"/>
<dbReference type="KEGG" id="sne:SPN23F10550"/>
<dbReference type="HOGENOM" id="CLU_001114_3_1_9"/>
<dbReference type="GO" id="GO:0005829">
    <property type="term" value="C:cytosol"/>
    <property type="evidence" value="ECO:0007669"/>
    <property type="project" value="TreeGrafter"/>
</dbReference>
<dbReference type="GO" id="GO:0033202">
    <property type="term" value="C:DNA helicase complex"/>
    <property type="evidence" value="ECO:0007669"/>
    <property type="project" value="TreeGrafter"/>
</dbReference>
<dbReference type="GO" id="GO:0043138">
    <property type="term" value="F:3'-5' DNA helicase activity"/>
    <property type="evidence" value="ECO:0007669"/>
    <property type="project" value="UniProtKB-UniRule"/>
</dbReference>
<dbReference type="GO" id="GO:0008408">
    <property type="term" value="F:3'-5' exonuclease activity"/>
    <property type="evidence" value="ECO:0007669"/>
    <property type="project" value="UniProtKB-UniRule"/>
</dbReference>
<dbReference type="GO" id="GO:0005524">
    <property type="term" value="F:ATP binding"/>
    <property type="evidence" value="ECO:0007669"/>
    <property type="project" value="UniProtKB-UniRule"/>
</dbReference>
<dbReference type="GO" id="GO:0016887">
    <property type="term" value="F:ATP hydrolysis activity"/>
    <property type="evidence" value="ECO:0007669"/>
    <property type="project" value="RHEA"/>
</dbReference>
<dbReference type="GO" id="GO:0003690">
    <property type="term" value="F:double-stranded DNA binding"/>
    <property type="evidence" value="ECO:0007669"/>
    <property type="project" value="UniProtKB-UniRule"/>
</dbReference>
<dbReference type="GO" id="GO:0000724">
    <property type="term" value="P:double-strand break repair via homologous recombination"/>
    <property type="evidence" value="ECO:0007669"/>
    <property type="project" value="UniProtKB-UniRule"/>
</dbReference>
<dbReference type="CDD" id="cd17932">
    <property type="entry name" value="DEXQc_UvrD"/>
    <property type="match status" value="1"/>
</dbReference>
<dbReference type="FunFam" id="3.40.50.300:FF:001196">
    <property type="entry name" value="ATP-dependent helicase/nuclease subunit A"/>
    <property type="match status" value="1"/>
</dbReference>
<dbReference type="FunFam" id="3.40.50.300:FF:002351">
    <property type="entry name" value="ATP-dependent helicase/nuclease subunit A"/>
    <property type="match status" value="1"/>
</dbReference>
<dbReference type="Gene3D" id="1.10.10.160">
    <property type="match status" value="1"/>
</dbReference>
<dbReference type="Gene3D" id="3.90.320.10">
    <property type="match status" value="1"/>
</dbReference>
<dbReference type="Gene3D" id="3.40.50.300">
    <property type="entry name" value="P-loop containing nucleotide triphosphate hydrolases"/>
    <property type="match status" value="4"/>
</dbReference>
<dbReference type="Gene3D" id="1.10.486.10">
    <property type="entry name" value="PCRA, domain 4"/>
    <property type="match status" value="1"/>
</dbReference>
<dbReference type="HAMAP" id="MF_01451">
    <property type="entry name" value="AddA"/>
    <property type="match status" value="1"/>
</dbReference>
<dbReference type="InterPro" id="IPR014152">
    <property type="entry name" value="AddA"/>
</dbReference>
<dbReference type="InterPro" id="IPR013986">
    <property type="entry name" value="DExx_box_DNA_helicase_dom_sf"/>
</dbReference>
<dbReference type="InterPro" id="IPR014017">
    <property type="entry name" value="DNA_helicase_UvrD-like_C"/>
</dbReference>
<dbReference type="InterPro" id="IPR000212">
    <property type="entry name" value="DNA_helicase_UvrD/REP"/>
</dbReference>
<dbReference type="InterPro" id="IPR027417">
    <property type="entry name" value="P-loop_NTPase"/>
</dbReference>
<dbReference type="InterPro" id="IPR011604">
    <property type="entry name" value="PDDEXK-like_dom_sf"/>
</dbReference>
<dbReference type="InterPro" id="IPR038726">
    <property type="entry name" value="PDDEXK_AddAB-type"/>
</dbReference>
<dbReference type="InterPro" id="IPR011335">
    <property type="entry name" value="Restrct_endonuc-II-like"/>
</dbReference>
<dbReference type="InterPro" id="IPR014016">
    <property type="entry name" value="UvrD-like_ATP-bd"/>
</dbReference>
<dbReference type="NCBIfam" id="TIGR02785">
    <property type="entry name" value="addA_Gpos"/>
    <property type="match status" value="1"/>
</dbReference>
<dbReference type="PANTHER" id="PTHR11070:SF48">
    <property type="entry name" value="ATP-DEPENDENT HELICASE_NUCLEASE SUBUNIT A"/>
    <property type="match status" value="1"/>
</dbReference>
<dbReference type="PANTHER" id="PTHR11070">
    <property type="entry name" value="UVRD / RECB / PCRA DNA HELICASE FAMILY MEMBER"/>
    <property type="match status" value="1"/>
</dbReference>
<dbReference type="Pfam" id="PF12705">
    <property type="entry name" value="PDDEXK_1"/>
    <property type="match status" value="1"/>
</dbReference>
<dbReference type="Pfam" id="PF00580">
    <property type="entry name" value="UvrD-helicase"/>
    <property type="match status" value="1"/>
</dbReference>
<dbReference type="Pfam" id="PF13361">
    <property type="entry name" value="UvrD_C"/>
    <property type="match status" value="1"/>
</dbReference>
<dbReference type="SUPFAM" id="SSF52540">
    <property type="entry name" value="P-loop containing nucleoside triphosphate hydrolases"/>
    <property type="match status" value="1"/>
</dbReference>
<dbReference type="SUPFAM" id="SSF52980">
    <property type="entry name" value="Restriction endonuclease-like"/>
    <property type="match status" value="1"/>
</dbReference>
<dbReference type="PROSITE" id="PS51198">
    <property type="entry name" value="UVRD_HELICASE_ATP_BIND"/>
    <property type="match status" value="1"/>
</dbReference>
<dbReference type="PROSITE" id="PS51217">
    <property type="entry name" value="UVRD_HELICASE_CTER"/>
    <property type="match status" value="1"/>
</dbReference>
<name>ADDA_STRPJ</name>
<gene>
    <name evidence="1" type="primary">addA</name>
    <name type="ordered locus">SPN23F10550</name>
</gene>
<evidence type="ECO:0000255" key="1">
    <source>
        <dbReference type="HAMAP-Rule" id="MF_01451"/>
    </source>
</evidence>
<feature type="chain" id="PRO_0000379334" description="ATP-dependent helicase/nuclease subunit A">
    <location>
        <begin position="1"/>
        <end position="1216"/>
    </location>
</feature>
<feature type="domain" description="UvrD-like helicase ATP-binding" evidence="1">
    <location>
        <begin position="26"/>
        <end position="488"/>
    </location>
</feature>
<feature type="domain" description="UvrD-like helicase C-terminal" evidence="1">
    <location>
        <begin position="515"/>
        <end position="802"/>
    </location>
</feature>
<feature type="binding site" evidence="1">
    <location>
        <begin position="47"/>
        <end position="54"/>
    </location>
    <ligand>
        <name>ATP</name>
        <dbReference type="ChEBI" id="CHEBI:30616"/>
    </ligand>
</feature>
<comment type="function">
    <text evidence="1">The heterodimer acts as both an ATP-dependent DNA helicase and an ATP-dependent, dual-direction single-stranded exonuclease. Recognizes the chi site generating a DNA molecule suitable for the initiation of homologous recombination. The AddA nuclease domain is required for chi fragment generation; this subunit has the helicase and 3' -&gt; 5' nuclease activities.</text>
</comment>
<comment type="catalytic activity">
    <reaction evidence="1">
        <text>Couples ATP hydrolysis with the unwinding of duplex DNA by translocating in the 3'-5' direction.</text>
        <dbReference type="EC" id="5.6.2.4"/>
    </reaction>
</comment>
<comment type="catalytic activity">
    <reaction evidence="1">
        <text>ATP + H2O = ADP + phosphate + H(+)</text>
        <dbReference type="Rhea" id="RHEA:13065"/>
        <dbReference type="ChEBI" id="CHEBI:15377"/>
        <dbReference type="ChEBI" id="CHEBI:15378"/>
        <dbReference type="ChEBI" id="CHEBI:30616"/>
        <dbReference type="ChEBI" id="CHEBI:43474"/>
        <dbReference type="ChEBI" id="CHEBI:456216"/>
        <dbReference type="EC" id="5.6.2.4"/>
    </reaction>
</comment>
<comment type="cofactor">
    <cofactor evidence="1">
        <name>Mg(2+)</name>
        <dbReference type="ChEBI" id="CHEBI:18420"/>
    </cofactor>
</comment>
<comment type="subunit">
    <text evidence="1">Heterodimer of AddA and AddB/RexB.</text>
</comment>
<comment type="similarity">
    <text evidence="1">Belongs to the helicase family. AddA subfamily.</text>
</comment>
<proteinExistence type="inferred from homology"/>